<evidence type="ECO:0000255" key="1">
    <source>
        <dbReference type="HAMAP-Rule" id="MF_01588"/>
    </source>
</evidence>
<proteinExistence type="inferred from homology"/>
<name>DNLJ_BURL3</name>
<reference key="1">
    <citation type="submission" date="2005-10" db="EMBL/GenBank/DDBJ databases">
        <title>Complete sequence of chromosome 1 of Burkholderia sp. 383.</title>
        <authorList>
            <consortium name="US DOE Joint Genome Institute"/>
            <person name="Copeland A."/>
            <person name="Lucas S."/>
            <person name="Lapidus A."/>
            <person name="Barry K."/>
            <person name="Detter J.C."/>
            <person name="Glavina T."/>
            <person name="Hammon N."/>
            <person name="Israni S."/>
            <person name="Pitluck S."/>
            <person name="Chain P."/>
            <person name="Malfatti S."/>
            <person name="Shin M."/>
            <person name="Vergez L."/>
            <person name="Schmutz J."/>
            <person name="Larimer F."/>
            <person name="Land M."/>
            <person name="Kyrpides N."/>
            <person name="Lykidis A."/>
            <person name="Richardson P."/>
        </authorList>
    </citation>
    <scope>NUCLEOTIDE SEQUENCE [LARGE SCALE GENOMIC DNA]</scope>
    <source>
        <strain>ATCC 17760 / DSM 23089 / LMG 22485 / NCIMB 9086 / R18194 / 383</strain>
    </source>
</reference>
<organism>
    <name type="scientific">Burkholderia lata (strain ATCC 17760 / DSM 23089 / LMG 22485 / NCIMB 9086 / R18194 / 383)</name>
    <dbReference type="NCBI Taxonomy" id="482957"/>
    <lineage>
        <taxon>Bacteria</taxon>
        <taxon>Pseudomonadati</taxon>
        <taxon>Pseudomonadota</taxon>
        <taxon>Betaproteobacteria</taxon>
        <taxon>Burkholderiales</taxon>
        <taxon>Burkholderiaceae</taxon>
        <taxon>Burkholderia</taxon>
        <taxon>Burkholderia cepacia complex</taxon>
    </lineage>
</organism>
<sequence>MARTQAEPPASQPDARAAWLRDQLERANYAYYVLDQPDLPDAEYDRLFRELQQLETDHPELVTPDSPTQRVGGEAAGGFTPVVHDAPMLSLNNGFADEDIAAFDKRVADALDKTTDLAGSVTEPVEYACELKFDGLAISLRYEQGVFVQASTRGDGTTGEDVTENVRTIRSIPLKLKGKHVPAVLDVRGEVLMFKRDFARLNERQRAAEQREFANPRNAAAGSLRQLDSKITAQRPLSFFAYGIGVLDGMPMLDTHSALLDWYESLGLPVNREREVVQGAEGLLGFFRKIGEKRESLPYDIDGVVYKVNRRDEQERLGFVSRAPRFALAHKFPAQEALTKLVAIDVQVGRTGAITPVARLEPVFVGGATVTNATLHNEDEVRRKDIRIGDTVIVRRAGDVIPEVVGALLDRRPADAAEFVMPTECPVCGSKIERLPDEAIARCTGGLFCPAQRKQALWHFAQRRALDIDGLGEKIIDQLVELNLVRTPADLFNLGFATLAELDRFAEKSAQNLLDSLEKAKHTTLARFIYGLGIRHVGESTAKDLAKHFGSLTPIMDASIEELLEVNDVGPIVAESLHQFFAEEHNRTVIEQLRAPGKVTWPEGPPAPKAPQGVLAGKTVVLTGTLPTLTRDAAKEMLEAAGAKVAGSVSKKTDYVVAGAEAGSKLVKAEELGIPVLDEDGLHQLLEGNTP</sequence>
<accession>Q39F38</accession>
<keyword id="KW-0227">DNA damage</keyword>
<keyword id="KW-0234">DNA repair</keyword>
<keyword id="KW-0235">DNA replication</keyword>
<keyword id="KW-0436">Ligase</keyword>
<keyword id="KW-0460">Magnesium</keyword>
<keyword id="KW-0464">Manganese</keyword>
<keyword id="KW-0479">Metal-binding</keyword>
<keyword id="KW-0520">NAD</keyword>
<keyword id="KW-0862">Zinc</keyword>
<dbReference type="EC" id="6.5.1.2" evidence="1"/>
<dbReference type="EMBL" id="CP000151">
    <property type="protein sequence ID" value="ABB08928.1"/>
    <property type="molecule type" value="Genomic_DNA"/>
</dbReference>
<dbReference type="RefSeq" id="WP_011352466.1">
    <property type="nucleotide sequence ID" value="NC_007510.1"/>
</dbReference>
<dbReference type="SMR" id="Q39F38"/>
<dbReference type="GeneID" id="45095209"/>
<dbReference type="KEGG" id="bur:Bcep18194_A5334"/>
<dbReference type="PATRIC" id="fig|482957.22.peg.2284"/>
<dbReference type="HOGENOM" id="CLU_007764_2_1_4"/>
<dbReference type="Proteomes" id="UP000002705">
    <property type="component" value="Chromosome 1"/>
</dbReference>
<dbReference type="GO" id="GO:0005829">
    <property type="term" value="C:cytosol"/>
    <property type="evidence" value="ECO:0007669"/>
    <property type="project" value="TreeGrafter"/>
</dbReference>
<dbReference type="GO" id="GO:0003677">
    <property type="term" value="F:DNA binding"/>
    <property type="evidence" value="ECO:0007669"/>
    <property type="project" value="InterPro"/>
</dbReference>
<dbReference type="GO" id="GO:0003911">
    <property type="term" value="F:DNA ligase (NAD+) activity"/>
    <property type="evidence" value="ECO:0007669"/>
    <property type="project" value="UniProtKB-UniRule"/>
</dbReference>
<dbReference type="GO" id="GO:0046872">
    <property type="term" value="F:metal ion binding"/>
    <property type="evidence" value="ECO:0007669"/>
    <property type="project" value="UniProtKB-KW"/>
</dbReference>
<dbReference type="GO" id="GO:0006281">
    <property type="term" value="P:DNA repair"/>
    <property type="evidence" value="ECO:0007669"/>
    <property type="project" value="UniProtKB-KW"/>
</dbReference>
<dbReference type="GO" id="GO:0006260">
    <property type="term" value="P:DNA replication"/>
    <property type="evidence" value="ECO:0007669"/>
    <property type="project" value="UniProtKB-KW"/>
</dbReference>
<dbReference type="CDD" id="cd17748">
    <property type="entry name" value="BRCT_DNA_ligase_like"/>
    <property type="match status" value="1"/>
</dbReference>
<dbReference type="CDD" id="cd00114">
    <property type="entry name" value="LIGANc"/>
    <property type="match status" value="1"/>
</dbReference>
<dbReference type="FunFam" id="1.10.150.20:FF:000006">
    <property type="entry name" value="DNA ligase"/>
    <property type="match status" value="1"/>
</dbReference>
<dbReference type="FunFam" id="1.10.150.20:FF:000007">
    <property type="entry name" value="DNA ligase"/>
    <property type="match status" value="1"/>
</dbReference>
<dbReference type="FunFam" id="1.10.287.610:FF:000002">
    <property type="entry name" value="DNA ligase"/>
    <property type="match status" value="1"/>
</dbReference>
<dbReference type="FunFam" id="2.40.50.140:FF:000012">
    <property type="entry name" value="DNA ligase"/>
    <property type="match status" value="1"/>
</dbReference>
<dbReference type="FunFam" id="3.30.470.30:FF:000001">
    <property type="entry name" value="DNA ligase"/>
    <property type="match status" value="1"/>
</dbReference>
<dbReference type="FunFam" id="3.40.50.10190:FF:000054">
    <property type="entry name" value="DNA ligase"/>
    <property type="match status" value="1"/>
</dbReference>
<dbReference type="Gene3D" id="6.20.10.30">
    <property type="match status" value="1"/>
</dbReference>
<dbReference type="Gene3D" id="1.10.150.20">
    <property type="entry name" value="5' to 3' exonuclease, C-terminal subdomain"/>
    <property type="match status" value="2"/>
</dbReference>
<dbReference type="Gene3D" id="3.40.50.10190">
    <property type="entry name" value="BRCT domain"/>
    <property type="match status" value="1"/>
</dbReference>
<dbReference type="Gene3D" id="3.30.470.30">
    <property type="entry name" value="DNA ligase/mRNA capping enzyme"/>
    <property type="match status" value="1"/>
</dbReference>
<dbReference type="Gene3D" id="1.10.287.610">
    <property type="entry name" value="Helix hairpin bin"/>
    <property type="match status" value="1"/>
</dbReference>
<dbReference type="Gene3D" id="2.40.50.140">
    <property type="entry name" value="Nucleic acid-binding proteins"/>
    <property type="match status" value="1"/>
</dbReference>
<dbReference type="HAMAP" id="MF_01588">
    <property type="entry name" value="DNA_ligase_A"/>
    <property type="match status" value="1"/>
</dbReference>
<dbReference type="InterPro" id="IPR001357">
    <property type="entry name" value="BRCT_dom"/>
</dbReference>
<dbReference type="InterPro" id="IPR036420">
    <property type="entry name" value="BRCT_dom_sf"/>
</dbReference>
<dbReference type="InterPro" id="IPR041663">
    <property type="entry name" value="DisA/LigA_HHH"/>
</dbReference>
<dbReference type="InterPro" id="IPR001679">
    <property type="entry name" value="DNA_ligase"/>
</dbReference>
<dbReference type="InterPro" id="IPR018239">
    <property type="entry name" value="DNA_ligase_AS"/>
</dbReference>
<dbReference type="InterPro" id="IPR033136">
    <property type="entry name" value="DNA_ligase_CS"/>
</dbReference>
<dbReference type="InterPro" id="IPR013839">
    <property type="entry name" value="DNAligase_adenylation"/>
</dbReference>
<dbReference type="InterPro" id="IPR013840">
    <property type="entry name" value="DNAligase_N"/>
</dbReference>
<dbReference type="InterPro" id="IPR003583">
    <property type="entry name" value="Hlx-hairpin-Hlx_DNA-bd_motif"/>
</dbReference>
<dbReference type="InterPro" id="IPR012340">
    <property type="entry name" value="NA-bd_OB-fold"/>
</dbReference>
<dbReference type="InterPro" id="IPR004150">
    <property type="entry name" value="NAD_DNA_ligase_OB"/>
</dbReference>
<dbReference type="InterPro" id="IPR010994">
    <property type="entry name" value="RuvA_2-like"/>
</dbReference>
<dbReference type="InterPro" id="IPR004149">
    <property type="entry name" value="Znf_DNAligase_C4"/>
</dbReference>
<dbReference type="NCBIfam" id="TIGR00575">
    <property type="entry name" value="dnlj"/>
    <property type="match status" value="1"/>
</dbReference>
<dbReference type="NCBIfam" id="NF005932">
    <property type="entry name" value="PRK07956.1"/>
    <property type="match status" value="1"/>
</dbReference>
<dbReference type="PANTHER" id="PTHR23389">
    <property type="entry name" value="CHROMOSOME TRANSMISSION FIDELITY FACTOR 18"/>
    <property type="match status" value="1"/>
</dbReference>
<dbReference type="PANTHER" id="PTHR23389:SF9">
    <property type="entry name" value="DNA LIGASE"/>
    <property type="match status" value="1"/>
</dbReference>
<dbReference type="Pfam" id="PF00533">
    <property type="entry name" value="BRCT"/>
    <property type="match status" value="1"/>
</dbReference>
<dbReference type="Pfam" id="PF01653">
    <property type="entry name" value="DNA_ligase_aden"/>
    <property type="match status" value="1"/>
</dbReference>
<dbReference type="Pfam" id="PF03120">
    <property type="entry name" value="DNA_ligase_OB"/>
    <property type="match status" value="1"/>
</dbReference>
<dbReference type="Pfam" id="PF03119">
    <property type="entry name" value="DNA_ligase_ZBD"/>
    <property type="match status" value="1"/>
</dbReference>
<dbReference type="Pfam" id="PF12826">
    <property type="entry name" value="HHH_2"/>
    <property type="match status" value="1"/>
</dbReference>
<dbReference type="Pfam" id="PF14520">
    <property type="entry name" value="HHH_5"/>
    <property type="match status" value="1"/>
</dbReference>
<dbReference type="Pfam" id="PF22745">
    <property type="entry name" value="Nlig-Ia"/>
    <property type="match status" value="1"/>
</dbReference>
<dbReference type="PIRSF" id="PIRSF001604">
    <property type="entry name" value="LigA"/>
    <property type="match status" value="1"/>
</dbReference>
<dbReference type="SMART" id="SM00292">
    <property type="entry name" value="BRCT"/>
    <property type="match status" value="1"/>
</dbReference>
<dbReference type="SMART" id="SM00278">
    <property type="entry name" value="HhH1"/>
    <property type="match status" value="3"/>
</dbReference>
<dbReference type="SMART" id="SM00532">
    <property type="entry name" value="LIGANc"/>
    <property type="match status" value="1"/>
</dbReference>
<dbReference type="SUPFAM" id="SSF52113">
    <property type="entry name" value="BRCT domain"/>
    <property type="match status" value="1"/>
</dbReference>
<dbReference type="SUPFAM" id="SSF56091">
    <property type="entry name" value="DNA ligase/mRNA capping enzyme, catalytic domain"/>
    <property type="match status" value="1"/>
</dbReference>
<dbReference type="SUPFAM" id="SSF50249">
    <property type="entry name" value="Nucleic acid-binding proteins"/>
    <property type="match status" value="1"/>
</dbReference>
<dbReference type="SUPFAM" id="SSF47781">
    <property type="entry name" value="RuvA domain 2-like"/>
    <property type="match status" value="1"/>
</dbReference>
<dbReference type="PROSITE" id="PS50172">
    <property type="entry name" value="BRCT"/>
    <property type="match status" value="1"/>
</dbReference>
<dbReference type="PROSITE" id="PS01055">
    <property type="entry name" value="DNA_LIGASE_N1"/>
    <property type="match status" value="1"/>
</dbReference>
<dbReference type="PROSITE" id="PS01056">
    <property type="entry name" value="DNA_LIGASE_N2"/>
    <property type="match status" value="1"/>
</dbReference>
<feature type="chain" id="PRO_0000313169" description="DNA ligase">
    <location>
        <begin position="1"/>
        <end position="691"/>
    </location>
</feature>
<feature type="domain" description="BRCT" evidence="1">
    <location>
        <begin position="610"/>
        <end position="691"/>
    </location>
</feature>
<feature type="active site" description="N6-AMP-lysine intermediate" evidence="1">
    <location>
        <position position="132"/>
    </location>
</feature>
<feature type="binding site" evidence="1">
    <location>
        <begin position="41"/>
        <end position="45"/>
    </location>
    <ligand>
        <name>NAD(+)</name>
        <dbReference type="ChEBI" id="CHEBI:57540"/>
    </ligand>
</feature>
<feature type="binding site" evidence="1">
    <location>
        <begin position="90"/>
        <end position="91"/>
    </location>
    <ligand>
        <name>NAD(+)</name>
        <dbReference type="ChEBI" id="CHEBI:57540"/>
    </ligand>
</feature>
<feature type="binding site" evidence="1">
    <location>
        <position position="130"/>
    </location>
    <ligand>
        <name>NAD(+)</name>
        <dbReference type="ChEBI" id="CHEBI:57540"/>
    </ligand>
</feature>
<feature type="binding site" evidence="1">
    <location>
        <position position="153"/>
    </location>
    <ligand>
        <name>NAD(+)</name>
        <dbReference type="ChEBI" id="CHEBI:57540"/>
    </ligand>
</feature>
<feature type="binding site" evidence="1">
    <location>
        <position position="190"/>
    </location>
    <ligand>
        <name>NAD(+)</name>
        <dbReference type="ChEBI" id="CHEBI:57540"/>
    </ligand>
</feature>
<feature type="binding site" evidence="1">
    <location>
        <position position="307"/>
    </location>
    <ligand>
        <name>NAD(+)</name>
        <dbReference type="ChEBI" id="CHEBI:57540"/>
    </ligand>
</feature>
<feature type="binding site" evidence="1">
    <location>
        <position position="331"/>
    </location>
    <ligand>
        <name>NAD(+)</name>
        <dbReference type="ChEBI" id="CHEBI:57540"/>
    </ligand>
</feature>
<feature type="binding site" evidence="1">
    <location>
        <position position="425"/>
    </location>
    <ligand>
        <name>Zn(2+)</name>
        <dbReference type="ChEBI" id="CHEBI:29105"/>
    </ligand>
</feature>
<feature type="binding site" evidence="1">
    <location>
        <position position="428"/>
    </location>
    <ligand>
        <name>Zn(2+)</name>
        <dbReference type="ChEBI" id="CHEBI:29105"/>
    </ligand>
</feature>
<feature type="binding site" evidence="1">
    <location>
        <position position="443"/>
    </location>
    <ligand>
        <name>Zn(2+)</name>
        <dbReference type="ChEBI" id="CHEBI:29105"/>
    </ligand>
</feature>
<feature type="binding site" evidence="1">
    <location>
        <position position="449"/>
    </location>
    <ligand>
        <name>Zn(2+)</name>
        <dbReference type="ChEBI" id="CHEBI:29105"/>
    </ligand>
</feature>
<comment type="function">
    <text evidence="1">DNA ligase that catalyzes the formation of phosphodiester linkages between 5'-phosphoryl and 3'-hydroxyl groups in double-stranded DNA using NAD as a coenzyme and as the energy source for the reaction. It is essential for DNA replication and repair of damaged DNA.</text>
</comment>
<comment type="catalytic activity">
    <reaction evidence="1">
        <text>NAD(+) + (deoxyribonucleotide)n-3'-hydroxyl + 5'-phospho-(deoxyribonucleotide)m = (deoxyribonucleotide)n+m + AMP + beta-nicotinamide D-nucleotide.</text>
        <dbReference type="EC" id="6.5.1.2"/>
    </reaction>
</comment>
<comment type="cofactor">
    <cofactor evidence="1">
        <name>Mg(2+)</name>
        <dbReference type="ChEBI" id="CHEBI:18420"/>
    </cofactor>
    <cofactor evidence="1">
        <name>Mn(2+)</name>
        <dbReference type="ChEBI" id="CHEBI:29035"/>
    </cofactor>
</comment>
<comment type="similarity">
    <text evidence="1">Belongs to the NAD-dependent DNA ligase family. LigA subfamily.</text>
</comment>
<protein>
    <recommendedName>
        <fullName evidence="1">DNA ligase</fullName>
        <ecNumber evidence="1">6.5.1.2</ecNumber>
    </recommendedName>
    <alternativeName>
        <fullName evidence="1">Polydeoxyribonucleotide synthase [NAD(+)]</fullName>
    </alternativeName>
</protein>
<gene>
    <name evidence="1" type="primary">ligA</name>
    <name type="ordered locus">Bcep18194_A5334</name>
</gene>